<accession>A8SEE2</accession>
<comment type="subunit">
    <text evidence="1">Part of the 30S ribosomal subunit.</text>
</comment>
<comment type="subcellular location">
    <subcellularLocation>
        <location>Plastid</location>
        <location>Chloroplast</location>
    </subcellularLocation>
</comment>
<comment type="similarity">
    <text evidence="2">Belongs to the universal ribosomal protein uS3 family.</text>
</comment>
<protein>
    <recommendedName>
        <fullName evidence="2">Small ribosomal subunit protein uS3c</fullName>
    </recommendedName>
    <alternativeName>
        <fullName>30S ribosomal protein S3, chloroplastic</fullName>
    </alternativeName>
</protein>
<name>RR3_CERDE</name>
<sequence length="218" mass="25022">MGQKINPLGFRLGATQSHRSFWFAQPKNYSDGLQEDEKIRDCIKNYVQKEMRISSGFEGIARIGIQKRIDLIQVIIYIGFPNLLIEGRTRGIEELQSNVQKEFNSGNRRLNVVITRVAKPYGQPNILAEYIAGQLKKRVSFRKAMKKAIELTEQADTKGIQVQIAGRIDGKEIARVEWIREGRVPLQTIRAKIDHCSYMVRTIYGVLGIKIWIFVDED</sequence>
<proteinExistence type="inferred from homology"/>
<organism>
    <name type="scientific">Ceratophyllum demersum</name>
    <name type="common">Rigid hornwort</name>
    <name type="synonym">Coontail</name>
    <dbReference type="NCBI Taxonomy" id="4428"/>
    <lineage>
        <taxon>Eukaryota</taxon>
        <taxon>Viridiplantae</taxon>
        <taxon>Streptophyta</taxon>
        <taxon>Embryophyta</taxon>
        <taxon>Tracheophyta</taxon>
        <taxon>Spermatophyta</taxon>
        <taxon>Magnoliopsida</taxon>
        <taxon>Ceratophyllales</taxon>
        <taxon>Ceratophyllaceae</taxon>
        <taxon>Ceratophyllum</taxon>
    </lineage>
</organism>
<evidence type="ECO:0000250" key="1"/>
<evidence type="ECO:0000305" key="2"/>
<reference key="1">
    <citation type="journal article" date="2007" name="Proc. Natl. Acad. Sci. U.S.A.">
        <title>Using plastid genome-scale data to resolve enigmatic relationships among basal angiosperms.</title>
        <authorList>
            <person name="Moore M.J."/>
            <person name="Bell C.D."/>
            <person name="Soltis P.S."/>
            <person name="Soltis D.E."/>
        </authorList>
    </citation>
    <scope>NUCLEOTIDE SEQUENCE [LARGE SCALE GENOMIC DNA]</scope>
</reference>
<keyword id="KW-0150">Chloroplast</keyword>
<keyword id="KW-0934">Plastid</keyword>
<keyword id="KW-0687">Ribonucleoprotein</keyword>
<keyword id="KW-0689">Ribosomal protein</keyword>
<keyword id="KW-0694">RNA-binding</keyword>
<keyword id="KW-0699">rRNA-binding</keyword>
<gene>
    <name type="primary">rps3</name>
</gene>
<feature type="chain" id="PRO_0000323319" description="Small ribosomal subunit protein uS3c">
    <location>
        <begin position="1"/>
        <end position="218"/>
    </location>
</feature>
<feature type="domain" description="KH type-2">
    <location>
        <begin position="47"/>
        <end position="118"/>
    </location>
</feature>
<geneLocation type="chloroplast"/>
<dbReference type="EMBL" id="EF614270">
    <property type="protein sequence ID" value="ABQ81490.1"/>
    <property type="molecule type" value="Genomic_DNA"/>
</dbReference>
<dbReference type="RefSeq" id="YP_001542486.1">
    <property type="nucleotide sequence ID" value="NC_009962.1"/>
</dbReference>
<dbReference type="SMR" id="A8SEE2"/>
<dbReference type="GeneID" id="5729438"/>
<dbReference type="GO" id="GO:0009507">
    <property type="term" value="C:chloroplast"/>
    <property type="evidence" value="ECO:0007669"/>
    <property type="project" value="UniProtKB-SubCell"/>
</dbReference>
<dbReference type="GO" id="GO:0022627">
    <property type="term" value="C:cytosolic small ribosomal subunit"/>
    <property type="evidence" value="ECO:0007669"/>
    <property type="project" value="TreeGrafter"/>
</dbReference>
<dbReference type="GO" id="GO:0019843">
    <property type="term" value="F:rRNA binding"/>
    <property type="evidence" value="ECO:0007669"/>
    <property type="project" value="UniProtKB-KW"/>
</dbReference>
<dbReference type="GO" id="GO:0003735">
    <property type="term" value="F:structural constituent of ribosome"/>
    <property type="evidence" value="ECO:0007669"/>
    <property type="project" value="InterPro"/>
</dbReference>
<dbReference type="GO" id="GO:0006412">
    <property type="term" value="P:translation"/>
    <property type="evidence" value="ECO:0007669"/>
    <property type="project" value="UniProtKB-UniRule"/>
</dbReference>
<dbReference type="CDD" id="cd02412">
    <property type="entry name" value="KH-II_30S_S3"/>
    <property type="match status" value="1"/>
</dbReference>
<dbReference type="FunFam" id="3.30.1140.32:FF:000003">
    <property type="entry name" value="30S ribosomal protein S3, chloroplastic"/>
    <property type="match status" value="1"/>
</dbReference>
<dbReference type="FunFam" id="3.30.300.20:FF:000008">
    <property type="entry name" value="30S ribosomal protein S3, chloroplastic"/>
    <property type="match status" value="1"/>
</dbReference>
<dbReference type="Gene3D" id="3.30.300.20">
    <property type="match status" value="1"/>
</dbReference>
<dbReference type="Gene3D" id="3.30.1140.32">
    <property type="entry name" value="Ribosomal protein S3, C-terminal domain"/>
    <property type="match status" value="1"/>
</dbReference>
<dbReference type="HAMAP" id="MF_01309_B">
    <property type="entry name" value="Ribosomal_uS3_B"/>
    <property type="match status" value="1"/>
</dbReference>
<dbReference type="InterPro" id="IPR015946">
    <property type="entry name" value="KH_dom-like_a/b"/>
</dbReference>
<dbReference type="InterPro" id="IPR009019">
    <property type="entry name" value="KH_sf_prok-type"/>
</dbReference>
<dbReference type="InterPro" id="IPR036419">
    <property type="entry name" value="Ribosomal_S3_C_sf"/>
</dbReference>
<dbReference type="InterPro" id="IPR005704">
    <property type="entry name" value="Ribosomal_uS3_bac-typ"/>
</dbReference>
<dbReference type="InterPro" id="IPR001351">
    <property type="entry name" value="Ribosomal_uS3_C"/>
</dbReference>
<dbReference type="InterPro" id="IPR018280">
    <property type="entry name" value="Ribosomal_uS3_CS"/>
</dbReference>
<dbReference type="NCBIfam" id="TIGR01009">
    <property type="entry name" value="rpsC_bact"/>
    <property type="match status" value="1"/>
</dbReference>
<dbReference type="PANTHER" id="PTHR11760">
    <property type="entry name" value="30S/40S RIBOSOMAL PROTEIN S3"/>
    <property type="match status" value="1"/>
</dbReference>
<dbReference type="PANTHER" id="PTHR11760:SF19">
    <property type="entry name" value="SMALL RIBOSOMAL SUBUNIT PROTEIN US3C"/>
    <property type="match status" value="1"/>
</dbReference>
<dbReference type="Pfam" id="PF00189">
    <property type="entry name" value="Ribosomal_S3_C"/>
    <property type="match status" value="1"/>
</dbReference>
<dbReference type="SUPFAM" id="SSF54814">
    <property type="entry name" value="Prokaryotic type KH domain (KH-domain type II)"/>
    <property type="match status" value="1"/>
</dbReference>
<dbReference type="SUPFAM" id="SSF54821">
    <property type="entry name" value="Ribosomal protein S3 C-terminal domain"/>
    <property type="match status" value="1"/>
</dbReference>
<dbReference type="PROSITE" id="PS00548">
    <property type="entry name" value="RIBOSOMAL_S3"/>
    <property type="match status" value="1"/>
</dbReference>